<proteinExistence type="evidence at transcript level"/>
<keyword id="KW-0106">Calcium</keyword>
<keyword id="KW-0256">Endoplasmic reticulum</keyword>
<keyword id="KW-0472">Membrane</keyword>
<keyword id="KW-0479">Metal-binding</keyword>
<keyword id="KW-1185">Reference proteome</keyword>
<keyword id="KW-0677">Repeat</keyword>
<keyword id="KW-0812">Transmembrane</keyword>
<keyword id="KW-1133">Transmembrane helix</keyword>
<comment type="function">
    <text evidence="4">May function as a signaling molecule by regulating the trafficking of other regulators.</text>
</comment>
<comment type="cofactor">
    <cofactor evidence="2">
        <name>Ca(2+)</name>
        <dbReference type="ChEBI" id="CHEBI:29108"/>
    </cofactor>
</comment>
<comment type="subcellular location">
    <subcellularLocation>
        <location evidence="3">Endoplasmic reticulum membrane</location>
        <topology evidence="1">Multi-pass membrane protein</topology>
    </subcellularLocation>
</comment>
<comment type="tissue specificity">
    <text evidence="3">Expressed in root vascular tissues and meristems (PubMed:29259105). Observed in flowers (PubMed:29259105).</text>
</comment>
<comment type="developmental stage">
    <text evidence="3">In developing flowers, present at low levels in ovules.</text>
</comment>
<comment type="similarity">
    <text evidence="5">Belongs to the MCTP family.</text>
</comment>
<protein>
    <recommendedName>
        <fullName evidence="4">Multiple C2 domain and transmembrane region protein 12</fullName>
    </recommendedName>
</protein>
<organism>
    <name type="scientific">Arabidopsis thaliana</name>
    <name type="common">Mouse-ear cress</name>
    <dbReference type="NCBI Taxonomy" id="3702"/>
    <lineage>
        <taxon>Eukaryota</taxon>
        <taxon>Viridiplantae</taxon>
        <taxon>Streptophyta</taxon>
        <taxon>Embryophyta</taxon>
        <taxon>Tracheophyta</taxon>
        <taxon>Spermatophyta</taxon>
        <taxon>Magnoliopsida</taxon>
        <taxon>eudicotyledons</taxon>
        <taxon>Gunneridae</taxon>
        <taxon>Pentapetalae</taxon>
        <taxon>rosids</taxon>
        <taxon>malvids</taxon>
        <taxon>Brassicales</taxon>
        <taxon>Brassicaceae</taxon>
        <taxon>Camelineae</taxon>
        <taxon>Arabidopsis</taxon>
    </lineage>
</organism>
<feature type="chain" id="PRO_0000457906" description="Multiple C2 domain and transmembrane region protein 12">
    <location>
        <begin position="1"/>
        <end position="795"/>
    </location>
</feature>
<feature type="transmembrane region" description="Helical" evidence="1">
    <location>
        <begin position="590"/>
        <end position="610"/>
    </location>
</feature>
<feature type="transmembrane region" description="Helical" evidence="1">
    <location>
        <begin position="612"/>
        <end position="632"/>
    </location>
</feature>
<feature type="transmembrane region" description="Helical" evidence="1">
    <location>
        <begin position="730"/>
        <end position="750"/>
    </location>
</feature>
<feature type="transmembrane region" description="Helical" evidence="1">
    <location>
        <begin position="752"/>
        <end position="772"/>
    </location>
</feature>
<feature type="domain" description="C2 1" evidence="2">
    <location>
        <begin position="24"/>
        <end position="142"/>
    </location>
</feature>
<feature type="domain" description="C2 2" evidence="2">
    <location>
        <begin position="180"/>
        <end position="298"/>
    </location>
</feature>
<feature type="domain" description="C2 3" evidence="2">
    <location>
        <begin position="341"/>
        <end position="463"/>
    </location>
</feature>
<feature type="binding site" evidence="2">
    <location>
        <position position="57"/>
    </location>
    <ligand>
        <name>Ca(2+)</name>
        <dbReference type="ChEBI" id="CHEBI:29108"/>
        <label>1</label>
    </ligand>
</feature>
<feature type="binding site" evidence="2">
    <location>
        <position position="57"/>
    </location>
    <ligand>
        <name>Ca(2+)</name>
        <dbReference type="ChEBI" id="CHEBI:29108"/>
        <label>2</label>
    </ligand>
</feature>
<feature type="binding site" evidence="2">
    <location>
        <position position="109"/>
    </location>
    <ligand>
        <name>Ca(2+)</name>
        <dbReference type="ChEBI" id="CHEBI:29108"/>
        <label>1</label>
    </ligand>
</feature>
<feature type="binding site" evidence="2">
    <location>
        <position position="109"/>
    </location>
    <ligand>
        <name>Ca(2+)</name>
        <dbReference type="ChEBI" id="CHEBI:29108"/>
        <label>2</label>
    </ligand>
</feature>
<feature type="binding site" evidence="2">
    <location>
        <position position="113"/>
    </location>
    <ligand>
        <name>Ca(2+)</name>
        <dbReference type="ChEBI" id="CHEBI:29108"/>
        <label>2</label>
    </ligand>
</feature>
<accession>Q9M366</accession>
<accession>A0A178VCI3</accession>
<evidence type="ECO:0000255" key="1"/>
<evidence type="ECO:0000255" key="2">
    <source>
        <dbReference type="PROSITE-ProRule" id="PRU00041"/>
    </source>
</evidence>
<evidence type="ECO:0000269" key="3">
    <source>
    </source>
</evidence>
<evidence type="ECO:0000303" key="4">
    <source>
    </source>
</evidence>
<evidence type="ECO:0000305" key="5"/>
<evidence type="ECO:0000312" key="6">
    <source>
        <dbReference type="Araport" id="AT3G61720"/>
    </source>
</evidence>
<evidence type="ECO:0000312" key="7">
    <source>
        <dbReference type="EMBL" id="CAB71102.1"/>
    </source>
</evidence>
<dbReference type="EMBL" id="AL132959">
    <property type="protein sequence ID" value="CAB71102.1"/>
    <property type="molecule type" value="Genomic_DNA"/>
</dbReference>
<dbReference type="EMBL" id="CP002686">
    <property type="protein sequence ID" value="AEE80247.1"/>
    <property type="molecule type" value="Genomic_DNA"/>
</dbReference>
<dbReference type="PIR" id="T47964">
    <property type="entry name" value="T47964"/>
</dbReference>
<dbReference type="RefSeq" id="NP_191731.1">
    <property type="nucleotide sequence ID" value="NM_116037.1"/>
</dbReference>
<dbReference type="SMR" id="Q9M366"/>
<dbReference type="FunCoup" id="Q9M366">
    <property type="interactions" value="203"/>
</dbReference>
<dbReference type="STRING" id="3702.Q9M366"/>
<dbReference type="GlyGen" id="Q9M366">
    <property type="glycosylation" value="2 sites"/>
</dbReference>
<dbReference type="PaxDb" id="3702-AT3G61720.1"/>
<dbReference type="EnsemblPlants" id="AT3G61720.1">
    <property type="protein sequence ID" value="AT3G61720.1"/>
    <property type="gene ID" value="AT3G61720"/>
</dbReference>
<dbReference type="GeneID" id="825345"/>
<dbReference type="Gramene" id="AT3G61720.1">
    <property type="protein sequence ID" value="AT3G61720.1"/>
    <property type="gene ID" value="AT3G61720"/>
</dbReference>
<dbReference type="KEGG" id="ath:AT3G61720"/>
<dbReference type="Araport" id="AT3G61720"/>
<dbReference type="TAIR" id="AT3G61720">
    <property type="gene designation" value="MCTP12"/>
</dbReference>
<dbReference type="eggNOG" id="ENOG502R77N">
    <property type="taxonomic scope" value="Eukaryota"/>
</dbReference>
<dbReference type="HOGENOM" id="CLU_003762_4_0_1"/>
<dbReference type="InParanoid" id="Q9M366"/>
<dbReference type="OMA" id="RIAPQWY"/>
<dbReference type="PRO" id="PR:Q9M366"/>
<dbReference type="Proteomes" id="UP000006548">
    <property type="component" value="Chromosome 3"/>
</dbReference>
<dbReference type="ExpressionAtlas" id="Q9M366">
    <property type="expression patterns" value="differential"/>
</dbReference>
<dbReference type="GO" id="GO:0005789">
    <property type="term" value="C:endoplasmic reticulum membrane"/>
    <property type="evidence" value="ECO:0007669"/>
    <property type="project" value="UniProtKB-SubCell"/>
</dbReference>
<dbReference type="GO" id="GO:0046872">
    <property type="term" value="F:metal ion binding"/>
    <property type="evidence" value="ECO:0007669"/>
    <property type="project" value="UniProtKB-KW"/>
</dbReference>
<dbReference type="CDD" id="cd04019">
    <property type="entry name" value="C2C_MCTP_PRT_plant"/>
    <property type="match status" value="1"/>
</dbReference>
<dbReference type="CDD" id="cd08379">
    <property type="entry name" value="C2D_MCTP_PRT_plant"/>
    <property type="match status" value="1"/>
</dbReference>
<dbReference type="FunFam" id="2.60.40.150:FF:000090">
    <property type="entry name" value="C2 domain-containing protein"/>
    <property type="match status" value="1"/>
</dbReference>
<dbReference type="Gene3D" id="2.60.40.150">
    <property type="entry name" value="C2 domain"/>
    <property type="match status" value="3"/>
</dbReference>
<dbReference type="InterPro" id="IPR000008">
    <property type="entry name" value="C2_dom"/>
</dbReference>
<dbReference type="InterPro" id="IPR035892">
    <property type="entry name" value="C2_domain_sf"/>
</dbReference>
<dbReference type="InterPro" id="IPR047258">
    <property type="entry name" value="C2C_MCTP_PRT_plant"/>
</dbReference>
<dbReference type="InterPro" id="IPR047255">
    <property type="entry name" value="C2D_MCTP_PRT_plant"/>
</dbReference>
<dbReference type="InterPro" id="IPR013583">
    <property type="entry name" value="MCTP_C"/>
</dbReference>
<dbReference type="InterPro" id="IPR047259">
    <property type="entry name" value="QUIRKY-like"/>
</dbReference>
<dbReference type="PANTHER" id="PTHR31425:SF45">
    <property type="entry name" value="MULTIPLE C2 DOMAIN AND TRANSMEMBRANE REGION PROTEIN 12-RELATED"/>
    <property type="match status" value="1"/>
</dbReference>
<dbReference type="PANTHER" id="PTHR31425">
    <property type="entry name" value="PHOSPHORIBOSYLANTHRANILATE TRANSFERASE ISOFORM 1"/>
    <property type="match status" value="1"/>
</dbReference>
<dbReference type="Pfam" id="PF00168">
    <property type="entry name" value="C2"/>
    <property type="match status" value="3"/>
</dbReference>
<dbReference type="Pfam" id="PF08372">
    <property type="entry name" value="PRT_C"/>
    <property type="match status" value="1"/>
</dbReference>
<dbReference type="SMART" id="SM00239">
    <property type="entry name" value="C2"/>
    <property type="match status" value="3"/>
</dbReference>
<dbReference type="SUPFAM" id="SSF49562">
    <property type="entry name" value="C2 domain (Calcium/lipid-binding domain, CaLB)"/>
    <property type="match status" value="3"/>
</dbReference>
<dbReference type="PROSITE" id="PS50004">
    <property type="entry name" value="C2"/>
    <property type="match status" value="2"/>
</dbReference>
<gene>
    <name evidence="4" type="primary">MCTP12</name>
    <name evidence="6" type="ordered locus">At3g61720</name>
    <name evidence="7" type="ORF">F15G16.110</name>
</gene>
<name>MCT12_ARATH</name>
<reference key="1">
    <citation type="journal article" date="2000" name="Nature">
        <title>Sequence and analysis of chromosome 3 of the plant Arabidopsis thaliana.</title>
        <authorList>
            <person name="Salanoubat M."/>
            <person name="Lemcke K."/>
            <person name="Rieger M."/>
            <person name="Ansorge W."/>
            <person name="Unseld M."/>
            <person name="Fartmann B."/>
            <person name="Valle G."/>
            <person name="Bloecker H."/>
            <person name="Perez-Alonso M."/>
            <person name="Obermaier B."/>
            <person name="Delseny M."/>
            <person name="Boutry M."/>
            <person name="Grivell L.A."/>
            <person name="Mache R."/>
            <person name="Puigdomenech P."/>
            <person name="De Simone V."/>
            <person name="Choisne N."/>
            <person name="Artiguenave F."/>
            <person name="Robert C."/>
            <person name="Brottier P."/>
            <person name="Wincker P."/>
            <person name="Cattolico L."/>
            <person name="Weissenbach J."/>
            <person name="Saurin W."/>
            <person name="Quetier F."/>
            <person name="Schaefer M."/>
            <person name="Mueller-Auer S."/>
            <person name="Gabel C."/>
            <person name="Fuchs M."/>
            <person name="Benes V."/>
            <person name="Wurmbach E."/>
            <person name="Drzonek H."/>
            <person name="Erfle H."/>
            <person name="Jordan N."/>
            <person name="Bangert S."/>
            <person name="Wiedelmann R."/>
            <person name="Kranz H."/>
            <person name="Voss H."/>
            <person name="Holland R."/>
            <person name="Brandt P."/>
            <person name="Nyakatura G."/>
            <person name="Vezzi A."/>
            <person name="D'Angelo M."/>
            <person name="Pallavicini A."/>
            <person name="Toppo S."/>
            <person name="Simionati B."/>
            <person name="Conrad A."/>
            <person name="Hornischer K."/>
            <person name="Kauer G."/>
            <person name="Loehnert T.-H."/>
            <person name="Nordsiek G."/>
            <person name="Reichelt J."/>
            <person name="Scharfe M."/>
            <person name="Schoen O."/>
            <person name="Bargues M."/>
            <person name="Terol J."/>
            <person name="Climent J."/>
            <person name="Navarro P."/>
            <person name="Collado C."/>
            <person name="Perez-Perez A."/>
            <person name="Ottenwaelder B."/>
            <person name="Duchemin D."/>
            <person name="Cooke R."/>
            <person name="Laudie M."/>
            <person name="Berger-Llauro C."/>
            <person name="Purnelle B."/>
            <person name="Masuy D."/>
            <person name="de Haan M."/>
            <person name="Maarse A.C."/>
            <person name="Alcaraz J.-P."/>
            <person name="Cottet A."/>
            <person name="Casacuberta E."/>
            <person name="Monfort A."/>
            <person name="Argiriou A."/>
            <person name="Flores M."/>
            <person name="Liguori R."/>
            <person name="Vitale D."/>
            <person name="Mannhaupt G."/>
            <person name="Haase D."/>
            <person name="Schoof H."/>
            <person name="Rudd S."/>
            <person name="Zaccaria P."/>
            <person name="Mewes H.-W."/>
            <person name="Mayer K.F.X."/>
            <person name="Kaul S."/>
            <person name="Town C.D."/>
            <person name="Koo H.L."/>
            <person name="Tallon L.J."/>
            <person name="Jenkins J."/>
            <person name="Rooney T."/>
            <person name="Rizzo M."/>
            <person name="Walts A."/>
            <person name="Utterback T."/>
            <person name="Fujii C.Y."/>
            <person name="Shea T.P."/>
            <person name="Creasy T.H."/>
            <person name="Haas B."/>
            <person name="Maiti R."/>
            <person name="Wu D."/>
            <person name="Peterson J."/>
            <person name="Van Aken S."/>
            <person name="Pai G."/>
            <person name="Militscher J."/>
            <person name="Sellers P."/>
            <person name="Gill J.E."/>
            <person name="Feldblyum T.V."/>
            <person name="Preuss D."/>
            <person name="Lin X."/>
            <person name="Nierman W.C."/>
            <person name="Salzberg S.L."/>
            <person name="White O."/>
            <person name="Venter J.C."/>
            <person name="Fraser C.M."/>
            <person name="Kaneko T."/>
            <person name="Nakamura Y."/>
            <person name="Sato S."/>
            <person name="Kato T."/>
            <person name="Asamizu E."/>
            <person name="Sasamoto S."/>
            <person name="Kimura T."/>
            <person name="Idesawa K."/>
            <person name="Kawashima K."/>
            <person name="Kishida Y."/>
            <person name="Kiyokawa C."/>
            <person name="Kohara M."/>
            <person name="Matsumoto M."/>
            <person name="Matsuno A."/>
            <person name="Muraki A."/>
            <person name="Nakayama S."/>
            <person name="Nakazaki N."/>
            <person name="Shinpo S."/>
            <person name="Takeuchi C."/>
            <person name="Wada T."/>
            <person name="Watanabe A."/>
            <person name="Yamada M."/>
            <person name="Yasuda M."/>
            <person name="Tabata S."/>
        </authorList>
    </citation>
    <scope>NUCLEOTIDE SEQUENCE [LARGE SCALE GENOMIC DNA]</scope>
    <source>
        <strain>cv. Columbia</strain>
    </source>
</reference>
<reference key="2">
    <citation type="journal article" date="2017" name="Plant J.">
        <title>Araport11: a complete reannotation of the Arabidopsis thaliana reference genome.</title>
        <authorList>
            <person name="Cheng C.Y."/>
            <person name="Krishnakumar V."/>
            <person name="Chan A.P."/>
            <person name="Thibaud-Nissen F."/>
            <person name="Schobel S."/>
            <person name="Town C.D."/>
        </authorList>
    </citation>
    <scope>GENOME REANNOTATION</scope>
    <source>
        <strain>cv. Columbia</strain>
    </source>
</reference>
<reference key="3">
    <citation type="journal article" date="2018" name="Plant Physiol.">
        <title>Characterization of multiple C2 domain and transmembrane region proteins in Arabidopsis.</title>
        <authorList>
            <person name="Liu L."/>
            <person name="Li C."/>
            <person name="Liang Z."/>
            <person name="Yu H."/>
        </authorList>
    </citation>
    <scope>TISSUE SPECIFICITY</scope>
    <scope>DEVELOPMENTAL STAGE</scope>
    <scope>SUBCELLULAR LOCATION</scope>
    <scope>GENE FAMILY</scope>
    <scope>NOMENCLATURE</scope>
    <source>
        <strain>cv. Columbia</strain>
    </source>
</reference>
<sequence length="795" mass="90769">MAANKDEFSVKQIFPKLGGERGARNPRYGPTSSHDLVEQMEFLYVQVIQAINNSVVNPSARICCPVVEITLGNYKSSTKNLPMGPNMDWNQVFAFDKSKGDVLSVTLKDGPTNTVINKRNFKLASEIPTRVPPDARIAPQWYSMHNTETDFYMELLMSVWFGTQVDEVYPEAWFSDACEVCASRVINTRPKVYLAPRLCYVRVTIVSGHDLISKDKNKTPSVYVTATLGKVALKTKVSSGTNPSWNQDLIFVASEPLEGTVYIRLIDREDEQHEGCIGTLKKKLTEMTPLKVPSSAPALFYDIEMPTEVKPAGDSRRFASRLKMKLATDQAYHVAEECTQYSSDNRAFVKGLWPGLLGKLEIGILGATGLKGSDEKKQTIDSYVVAKYGNKWARTRTVVNSVSPKWNEQYSWDVYEKCTVLTLGIYDNRQILEDKNKANDVPIGKVRIPLNRVQSDWIYTCSYPILKLGSSGLKKMGELQLAVRFVYVAQGYARYSAPFRWMLPKAHYKSPLSMYQIDKLRAQAVEINCANLARTEPALRSEVVSDMLKPKSRNFSIRISKDNFDRLYTVVKMVLWCVSVIASVRSTTACTPKFIALGVSFVFLFWEYYIYWLVTSWLVAYCIVLCIVVILLREILKSPRQTYNWLFYRNVTPPPLILVDLKLRKLDSINLDELAEEFDSFPSSENDLNILRMRYDRLRKIMENVMLLMGDAATQGERLLAAFTLLERPFVLIILLALCYCSMLVVCLGWDLHVRKCLIFVFICYWVQLPWFRNNLPDGSLNFFRRLPSNEDLMF</sequence>